<comment type="function">
    <text evidence="1">ATPase which is responsible for recognizing, binding, unfolding and translocation of pupylated proteins into the bacterial 20S proteasome core particle. May be essential for opening the gate of the 20S proteasome via an interaction with its C-terminus, thereby allowing substrate entry and access to the site of proteolysis. Thus, the C-termini of the proteasomal ATPase may function like a 'key in a lock' to induce gate opening and therefore regulate proteolysis.</text>
</comment>
<comment type="pathway">
    <text evidence="1">Protein degradation; proteasomal Pup-dependent pathway.</text>
</comment>
<comment type="subunit">
    <text evidence="1">Homohexamer. Assembles into a hexameric ring structure that caps the 20S proteasome core. Strongly interacts with the prokaryotic ubiquitin-like protein Pup through a hydrophobic interface; the interacting region of ARC lies in its N-terminal coiled-coil domain. There is one Pup binding site per ARC hexamer ring. Upon ATP-binding, the C-terminus of ARC interacts with the alpha-rings of the proteasome core, possibly by binding to the intersubunit pockets.</text>
</comment>
<comment type="domain">
    <text evidence="1">Consists of three main regions, an N-terminal coiled-coil domain that binds to protein Pup and functions as a docking station, an interdomain involved in ARC hexamerization, and a C-terminal ATPase domain of the AAA type.</text>
</comment>
<comment type="similarity">
    <text evidence="1">Belongs to the AAA ATPase family.</text>
</comment>
<accession>C7PVU9</accession>
<reference key="1">
    <citation type="journal article" date="2009" name="Stand. Genomic Sci.">
        <title>Complete genome sequence of Catenulispora acidiphila type strain (ID 139908).</title>
        <authorList>
            <person name="Copeland A."/>
            <person name="Lapidus A."/>
            <person name="Glavina Del Rio T."/>
            <person name="Nolan M."/>
            <person name="Lucas S."/>
            <person name="Chen F."/>
            <person name="Tice H."/>
            <person name="Cheng J.F."/>
            <person name="Bruce D."/>
            <person name="Goodwin L."/>
            <person name="Pitluck S."/>
            <person name="Mikhailova N."/>
            <person name="Pati A."/>
            <person name="Ivanova N."/>
            <person name="Mavromatis K."/>
            <person name="Chen A."/>
            <person name="Palaniappan K."/>
            <person name="Chain P."/>
            <person name="Land M."/>
            <person name="Hauser L."/>
            <person name="Chang Y.J."/>
            <person name="Jeffries C.D."/>
            <person name="Chertkov O."/>
            <person name="Brettin T."/>
            <person name="Detter J.C."/>
            <person name="Han C."/>
            <person name="Ali Z."/>
            <person name="Tindall B.J."/>
            <person name="Goker M."/>
            <person name="Bristow J."/>
            <person name="Eisen J.A."/>
            <person name="Markowitz V."/>
            <person name="Hugenholtz P."/>
            <person name="Kyrpides N.C."/>
            <person name="Klenk H.P."/>
        </authorList>
    </citation>
    <scope>NUCLEOTIDE SEQUENCE [LARGE SCALE GENOMIC DNA]</scope>
    <source>
        <strain>DSM 44928 / JCM 14897 / NBRC 102108 / NRRL B-24433 / ID139908</strain>
    </source>
</reference>
<sequence length="594" mass="65398">MPAHDDDIREGAGRSARGSDDLAAQVTYLEQEIAVLRRRLRDAADAPRGGRAVEERINELQATVAGLTSQNERLVATLREARDQIVALKEEIDRLAQPPSGFGVFLEDVGEGNADIFTGGRKMRVSVSPSIEGGTLRPGQEVMLNEALNVVAAFGFESVGEIVSLKEILEDGSRALVTGRTDEEHVVRLAEPLLESGVKLRPGDALLMEPRSGYVYEVIPKSEVEDLVLEEVPDISYLEIGGLDGQIELIRDAVELPYLHPDLFKEHKLRPPKGVLLYGPPGCGKTLIAKAVANSLAKKVAEVTGSDNVKSYFLNIKGPELLNKYVGETERHIRLVFQRAREKASEGAPVIVFFDEMDSLFRTRGSGISSDVENTIVPQLLSEIDGVEGLENVIVIGASNREDMIDPAILRPGRLDVKIKIERPDAEAAKDIFGKYVTTELPLHADDLAEHSGDRQETVTAMIQATVERMYSEIDENRFLEVTYANGDKEVMYFRDFNSGAMIQNIVDRAKKSAIKDFLDHKQKGLRVSHLLGACVDEFKENEDLPNTTNPDDWARISGKKGERIVFIRTLVTGKRGGDTGRSIDTIASTGQYL</sequence>
<proteinExistence type="inferred from homology"/>
<protein>
    <recommendedName>
        <fullName evidence="1">Proteasome-associated ATPase</fullName>
    </recommendedName>
    <alternativeName>
        <fullName evidence="1">AAA ATPase forming ring-shaped complexes</fullName>
        <shortName evidence="1">ARC</shortName>
    </alternativeName>
    <alternativeName>
        <fullName evidence="1">Proteasomal ATPase</fullName>
    </alternativeName>
</protein>
<feature type="chain" id="PRO_0000396973" description="Proteasome-associated ATPase">
    <location>
        <begin position="1"/>
        <end position="594"/>
    </location>
</feature>
<feature type="region of interest" description="Docks into pockets in the proteasome alpha-ring" evidence="1">
    <location>
        <begin position="593"/>
        <end position="594"/>
    </location>
</feature>
<feature type="coiled-coil region" evidence="1">
    <location>
        <begin position="20"/>
        <end position="98"/>
    </location>
</feature>
<feature type="binding site" evidence="1">
    <location>
        <begin position="282"/>
        <end position="287"/>
    </location>
    <ligand>
        <name>ATP</name>
        <dbReference type="ChEBI" id="CHEBI:30616"/>
    </ligand>
</feature>
<gene>
    <name evidence="1" type="primary">arc</name>
    <name type="ordered locus">Caci_2423</name>
</gene>
<dbReference type="EMBL" id="CP001700">
    <property type="protein sequence ID" value="ACU71341.1"/>
    <property type="molecule type" value="Genomic_DNA"/>
</dbReference>
<dbReference type="RefSeq" id="WP_012786634.1">
    <property type="nucleotide sequence ID" value="NC_013131.1"/>
</dbReference>
<dbReference type="SMR" id="C7PVU9"/>
<dbReference type="FunCoup" id="C7PVU9">
    <property type="interactions" value="157"/>
</dbReference>
<dbReference type="STRING" id="479433.Caci_2423"/>
<dbReference type="KEGG" id="cai:Caci_2423"/>
<dbReference type="eggNOG" id="COG1222">
    <property type="taxonomic scope" value="Bacteria"/>
</dbReference>
<dbReference type="HOGENOM" id="CLU_036054_0_0_11"/>
<dbReference type="InParanoid" id="C7PVU9"/>
<dbReference type="OrthoDB" id="9809379at2"/>
<dbReference type="UniPathway" id="UPA00997"/>
<dbReference type="Proteomes" id="UP000000851">
    <property type="component" value="Chromosome"/>
</dbReference>
<dbReference type="GO" id="GO:0000502">
    <property type="term" value="C:proteasome complex"/>
    <property type="evidence" value="ECO:0007669"/>
    <property type="project" value="UniProtKB-KW"/>
</dbReference>
<dbReference type="GO" id="GO:0005524">
    <property type="term" value="F:ATP binding"/>
    <property type="evidence" value="ECO:0007669"/>
    <property type="project" value="UniProtKB-UniRule"/>
</dbReference>
<dbReference type="GO" id="GO:0016887">
    <property type="term" value="F:ATP hydrolysis activity"/>
    <property type="evidence" value="ECO:0007669"/>
    <property type="project" value="UniProtKB-UniRule"/>
</dbReference>
<dbReference type="GO" id="GO:0019941">
    <property type="term" value="P:modification-dependent protein catabolic process"/>
    <property type="evidence" value="ECO:0007669"/>
    <property type="project" value="InterPro"/>
</dbReference>
<dbReference type="GO" id="GO:0010498">
    <property type="term" value="P:proteasomal protein catabolic process"/>
    <property type="evidence" value="ECO:0007669"/>
    <property type="project" value="InterPro"/>
</dbReference>
<dbReference type="FunFam" id="3.40.50.300:FF:000155">
    <property type="entry name" value="AAA ATPase forming ring-shaped complexes"/>
    <property type="match status" value="1"/>
</dbReference>
<dbReference type="Gene3D" id="1.10.8.60">
    <property type="match status" value="1"/>
</dbReference>
<dbReference type="Gene3D" id="1.20.5.170">
    <property type="match status" value="1"/>
</dbReference>
<dbReference type="Gene3D" id="2.40.50.140">
    <property type="entry name" value="Nucleic acid-binding proteins"/>
    <property type="match status" value="2"/>
</dbReference>
<dbReference type="Gene3D" id="3.40.50.300">
    <property type="entry name" value="P-loop containing nucleotide triphosphate hydrolases"/>
    <property type="match status" value="1"/>
</dbReference>
<dbReference type="HAMAP" id="MF_02112">
    <property type="entry name" value="ARC_ATPase"/>
    <property type="match status" value="1"/>
</dbReference>
<dbReference type="InterPro" id="IPR003593">
    <property type="entry name" value="AAA+_ATPase"/>
</dbReference>
<dbReference type="InterPro" id="IPR050168">
    <property type="entry name" value="AAA_ATPase_domain"/>
</dbReference>
<dbReference type="InterPro" id="IPR003959">
    <property type="entry name" value="ATPase_AAA_core"/>
</dbReference>
<dbReference type="InterPro" id="IPR003960">
    <property type="entry name" value="ATPase_AAA_CS"/>
</dbReference>
<dbReference type="InterPro" id="IPR012340">
    <property type="entry name" value="NA-bd_OB-fold"/>
</dbReference>
<dbReference type="InterPro" id="IPR027417">
    <property type="entry name" value="P-loop_NTPase"/>
</dbReference>
<dbReference type="InterPro" id="IPR032501">
    <property type="entry name" value="Prot_ATP_ID_OB_2nd"/>
</dbReference>
<dbReference type="InterPro" id="IPR041626">
    <property type="entry name" value="Prot_ATP_ID_OB_N"/>
</dbReference>
<dbReference type="InterPro" id="IPR022482">
    <property type="entry name" value="Proteasome_ATPase"/>
</dbReference>
<dbReference type="NCBIfam" id="TIGR03689">
    <property type="entry name" value="pup_AAA"/>
    <property type="match status" value="1"/>
</dbReference>
<dbReference type="PANTHER" id="PTHR23077">
    <property type="entry name" value="AAA-FAMILY ATPASE"/>
    <property type="match status" value="1"/>
</dbReference>
<dbReference type="PANTHER" id="PTHR23077:SF144">
    <property type="entry name" value="PROTEASOME-ASSOCIATED ATPASE"/>
    <property type="match status" value="1"/>
</dbReference>
<dbReference type="Pfam" id="PF00004">
    <property type="entry name" value="AAA"/>
    <property type="match status" value="1"/>
</dbReference>
<dbReference type="Pfam" id="PF16450">
    <property type="entry name" value="Prot_ATP_ID_OB_C"/>
    <property type="match status" value="1"/>
</dbReference>
<dbReference type="Pfam" id="PF17758">
    <property type="entry name" value="Prot_ATP_ID_OB_N"/>
    <property type="match status" value="1"/>
</dbReference>
<dbReference type="SMART" id="SM00382">
    <property type="entry name" value="AAA"/>
    <property type="match status" value="1"/>
</dbReference>
<dbReference type="SUPFAM" id="SSF52540">
    <property type="entry name" value="P-loop containing nucleoside triphosphate hydrolases"/>
    <property type="match status" value="1"/>
</dbReference>
<dbReference type="PROSITE" id="PS00674">
    <property type="entry name" value="AAA"/>
    <property type="match status" value="1"/>
</dbReference>
<evidence type="ECO:0000255" key="1">
    <source>
        <dbReference type="HAMAP-Rule" id="MF_02112"/>
    </source>
</evidence>
<organism>
    <name type="scientific">Catenulispora acidiphila (strain DSM 44928 / JCM 14897 / NBRC 102108 / NRRL B-24433 / ID139908)</name>
    <dbReference type="NCBI Taxonomy" id="479433"/>
    <lineage>
        <taxon>Bacteria</taxon>
        <taxon>Bacillati</taxon>
        <taxon>Actinomycetota</taxon>
        <taxon>Actinomycetes</taxon>
        <taxon>Catenulisporales</taxon>
        <taxon>Catenulisporaceae</taxon>
        <taxon>Catenulispora</taxon>
    </lineage>
</organism>
<name>ARC_CATAD</name>
<keyword id="KW-0067">ATP-binding</keyword>
<keyword id="KW-0143">Chaperone</keyword>
<keyword id="KW-0175">Coiled coil</keyword>
<keyword id="KW-0547">Nucleotide-binding</keyword>
<keyword id="KW-0647">Proteasome</keyword>
<keyword id="KW-1185">Reference proteome</keyword>